<dbReference type="EC" id="2.3.1.46" evidence="1"/>
<dbReference type="EMBL" id="CP000653">
    <property type="protein sequence ID" value="ABP58907.1"/>
    <property type="molecule type" value="Genomic_DNA"/>
</dbReference>
<dbReference type="RefSeq" id="WP_011915480.1">
    <property type="nucleotide sequence ID" value="NC_009436.1"/>
</dbReference>
<dbReference type="SMR" id="A4W5C7"/>
<dbReference type="STRING" id="399742.Ent638_0217"/>
<dbReference type="KEGG" id="ent:Ent638_0217"/>
<dbReference type="eggNOG" id="COG1897">
    <property type="taxonomic scope" value="Bacteria"/>
</dbReference>
<dbReference type="HOGENOM" id="CLU_057851_0_1_6"/>
<dbReference type="OrthoDB" id="9772423at2"/>
<dbReference type="UniPathway" id="UPA00051">
    <property type="reaction ID" value="UER00075"/>
</dbReference>
<dbReference type="Proteomes" id="UP000000230">
    <property type="component" value="Chromosome"/>
</dbReference>
<dbReference type="GO" id="GO:0005737">
    <property type="term" value="C:cytoplasm"/>
    <property type="evidence" value="ECO:0007669"/>
    <property type="project" value="UniProtKB-SubCell"/>
</dbReference>
<dbReference type="GO" id="GO:0004414">
    <property type="term" value="F:homoserine O-acetyltransferase activity"/>
    <property type="evidence" value="ECO:0007669"/>
    <property type="project" value="UniProtKB-UniRule"/>
</dbReference>
<dbReference type="GO" id="GO:0008899">
    <property type="term" value="F:homoserine O-succinyltransferase activity"/>
    <property type="evidence" value="ECO:0007669"/>
    <property type="project" value="UniProtKB-EC"/>
</dbReference>
<dbReference type="GO" id="GO:0019281">
    <property type="term" value="P:L-methionine biosynthetic process from homoserine via O-succinyl-L-homoserine and cystathionine"/>
    <property type="evidence" value="ECO:0007669"/>
    <property type="project" value="InterPro"/>
</dbReference>
<dbReference type="CDD" id="cd03131">
    <property type="entry name" value="GATase1_HTS"/>
    <property type="match status" value="1"/>
</dbReference>
<dbReference type="FunFam" id="3.40.50.880:FF:000004">
    <property type="entry name" value="Homoserine O-succinyltransferase"/>
    <property type="match status" value="1"/>
</dbReference>
<dbReference type="Gene3D" id="3.40.50.880">
    <property type="match status" value="1"/>
</dbReference>
<dbReference type="HAMAP" id="MF_00295">
    <property type="entry name" value="MetA_acyltransf"/>
    <property type="match status" value="1"/>
</dbReference>
<dbReference type="InterPro" id="IPR029062">
    <property type="entry name" value="Class_I_gatase-like"/>
</dbReference>
<dbReference type="InterPro" id="IPR005697">
    <property type="entry name" value="HST_MetA"/>
</dbReference>
<dbReference type="InterPro" id="IPR033752">
    <property type="entry name" value="MetA_family"/>
</dbReference>
<dbReference type="NCBIfam" id="TIGR01001">
    <property type="entry name" value="metA"/>
    <property type="match status" value="1"/>
</dbReference>
<dbReference type="PANTHER" id="PTHR20919">
    <property type="entry name" value="HOMOSERINE O-SUCCINYLTRANSFERASE"/>
    <property type="match status" value="1"/>
</dbReference>
<dbReference type="PANTHER" id="PTHR20919:SF0">
    <property type="entry name" value="HOMOSERINE O-SUCCINYLTRANSFERASE"/>
    <property type="match status" value="1"/>
</dbReference>
<dbReference type="Pfam" id="PF04204">
    <property type="entry name" value="HTS"/>
    <property type="match status" value="1"/>
</dbReference>
<dbReference type="PIRSF" id="PIRSF000450">
    <property type="entry name" value="H_ser_succinyltr"/>
    <property type="match status" value="1"/>
</dbReference>
<dbReference type="SUPFAM" id="SSF52317">
    <property type="entry name" value="Class I glutamine amidotransferase-like"/>
    <property type="match status" value="1"/>
</dbReference>
<evidence type="ECO:0000255" key="1">
    <source>
        <dbReference type="HAMAP-Rule" id="MF_00295"/>
    </source>
</evidence>
<feature type="chain" id="PRO_1000059292" description="Homoserine O-succinyltransferase">
    <location>
        <begin position="1"/>
        <end position="309"/>
    </location>
</feature>
<feature type="active site" description="Acyl-thioester intermediate" evidence="1">
    <location>
        <position position="142"/>
    </location>
</feature>
<feature type="active site" description="Proton acceptor" evidence="1">
    <location>
        <position position="235"/>
    </location>
</feature>
<feature type="active site" evidence="1">
    <location>
        <position position="237"/>
    </location>
</feature>
<feature type="binding site" evidence="1">
    <location>
        <position position="163"/>
    </location>
    <ligand>
        <name>substrate</name>
    </ligand>
</feature>
<feature type="binding site" evidence="1">
    <location>
        <position position="192"/>
    </location>
    <ligand>
        <name>substrate</name>
    </ligand>
</feature>
<feature type="binding site" evidence="1">
    <location>
        <position position="249"/>
    </location>
    <ligand>
        <name>substrate</name>
    </ligand>
</feature>
<feature type="site" description="Important for acyl-CoA specificity" evidence="1">
    <location>
        <position position="111"/>
    </location>
</feature>
<feature type="site" description="Important for substrate specificity" evidence="1">
    <location>
        <position position="192"/>
    </location>
</feature>
<sequence>MPIRVQDELPAVNFLREENVFVMKASRATGQEIRPLKVLILNLMPKKIETENQFLRLLSNSPLQVDVQLLRIDARESRNTPSEHLNNFYCDFEDIRNDNFDGLIVTGAPLGLVEFNDVAYWPQIKQVLEWAKDHVTSTLFVCWAVQAALNILYGIPKQTRSDKLSGVYEHHILHPHALLTRGFDDFFLAPHSRYADFPAALIRDYTDLEILAETEDGDAYLFASKDKRIAFVTGHPEYDAHTLASEFFRDVEAGLSPEVPYNYFPKNDPQIPPRASWRSHGNLLFINWLNYYVYQITPYDLRHMNPTLE</sequence>
<keyword id="KW-0012">Acyltransferase</keyword>
<keyword id="KW-0028">Amino-acid biosynthesis</keyword>
<keyword id="KW-0963">Cytoplasm</keyword>
<keyword id="KW-0486">Methionine biosynthesis</keyword>
<keyword id="KW-0808">Transferase</keyword>
<comment type="function">
    <text evidence="1">Transfers a succinyl group from succinyl-CoA to L-homoserine, forming succinyl-L-homoserine.</text>
</comment>
<comment type="catalytic activity">
    <reaction evidence="1">
        <text>L-homoserine + succinyl-CoA = O-succinyl-L-homoserine + CoA</text>
        <dbReference type="Rhea" id="RHEA:22008"/>
        <dbReference type="ChEBI" id="CHEBI:57287"/>
        <dbReference type="ChEBI" id="CHEBI:57292"/>
        <dbReference type="ChEBI" id="CHEBI:57476"/>
        <dbReference type="ChEBI" id="CHEBI:57661"/>
        <dbReference type="EC" id="2.3.1.46"/>
    </reaction>
</comment>
<comment type="pathway">
    <text evidence="1">Amino-acid biosynthesis; L-methionine biosynthesis via de novo pathway; O-succinyl-L-homoserine from L-homoserine: step 1/1.</text>
</comment>
<comment type="subcellular location">
    <subcellularLocation>
        <location evidence="1">Cytoplasm</location>
    </subcellularLocation>
</comment>
<comment type="similarity">
    <text evidence="1">Belongs to the MetA family.</text>
</comment>
<organism>
    <name type="scientific">Enterobacter sp. (strain 638)</name>
    <dbReference type="NCBI Taxonomy" id="399742"/>
    <lineage>
        <taxon>Bacteria</taxon>
        <taxon>Pseudomonadati</taxon>
        <taxon>Pseudomonadota</taxon>
        <taxon>Gammaproteobacteria</taxon>
        <taxon>Enterobacterales</taxon>
        <taxon>Enterobacteriaceae</taxon>
        <taxon>Enterobacter</taxon>
    </lineage>
</organism>
<protein>
    <recommendedName>
        <fullName evidence="1">Homoserine O-succinyltransferase</fullName>
        <shortName evidence="1">HST</shortName>
        <ecNumber evidence="1">2.3.1.46</ecNumber>
    </recommendedName>
    <alternativeName>
        <fullName evidence="1">Homoserine transsuccinylase</fullName>
        <shortName evidence="1">HTS</shortName>
    </alternativeName>
</protein>
<accession>A4W5C7</accession>
<name>METAS_ENT38</name>
<proteinExistence type="inferred from homology"/>
<gene>
    <name evidence="1" type="primary">metAS</name>
    <name type="ordered locus">Ent638_0217</name>
</gene>
<reference key="1">
    <citation type="journal article" date="2010" name="PLoS Genet.">
        <title>Genome sequence of the plant growth promoting endophytic bacterium Enterobacter sp. 638.</title>
        <authorList>
            <person name="Taghavi S."/>
            <person name="van der Lelie D."/>
            <person name="Hoffman A."/>
            <person name="Zhang Y.B."/>
            <person name="Walla M.D."/>
            <person name="Vangronsveld J."/>
            <person name="Newman L."/>
            <person name="Monchy S."/>
        </authorList>
    </citation>
    <scope>NUCLEOTIDE SEQUENCE [LARGE SCALE GENOMIC DNA]</scope>
    <source>
        <strain>638</strain>
    </source>
</reference>